<organism>
    <name type="scientific">Lactococcus lactis subsp. cremoris (strain SK11)</name>
    <dbReference type="NCBI Taxonomy" id="272622"/>
    <lineage>
        <taxon>Bacteria</taxon>
        <taxon>Bacillati</taxon>
        <taxon>Bacillota</taxon>
        <taxon>Bacilli</taxon>
        <taxon>Lactobacillales</taxon>
        <taxon>Streptococcaceae</taxon>
        <taxon>Lactococcus</taxon>
        <taxon>Lactococcus cremoris subsp. cremoris</taxon>
    </lineage>
</organism>
<dbReference type="EC" id="2.4.2.29" evidence="1"/>
<dbReference type="EMBL" id="CP000425">
    <property type="protein sequence ID" value="ABJ71778.1"/>
    <property type="molecule type" value="Genomic_DNA"/>
</dbReference>
<dbReference type="RefSeq" id="WP_011675211.1">
    <property type="nucleotide sequence ID" value="NC_008527.1"/>
</dbReference>
<dbReference type="SMR" id="Q032U4"/>
<dbReference type="GeneID" id="61108468"/>
<dbReference type="KEGG" id="llc:LACR_0159"/>
<dbReference type="HOGENOM" id="CLU_022060_0_1_9"/>
<dbReference type="UniPathway" id="UPA00392"/>
<dbReference type="Proteomes" id="UP000000240">
    <property type="component" value="Chromosome"/>
</dbReference>
<dbReference type="GO" id="GO:0005829">
    <property type="term" value="C:cytosol"/>
    <property type="evidence" value="ECO:0007669"/>
    <property type="project" value="TreeGrafter"/>
</dbReference>
<dbReference type="GO" id="GO:0046872">
    <property type="term" value="F:metal ion binding"/>
    <property type="evidence" value="ECO:0007669"/>
    <property type="project" value="UniProtKB-KW"/>
</dbReference>
<dbReference type="GO" id="GO:0008479">
    <property type="term" value="F:tRNA-guanosine(34) queuine transglycosylase activity"/>
    <property type="evidence" value="ECO:0007669"/>
    <property type="project" value="UniProtKB-UniRule"/>
</dbReference>
<dbReference type="GO" id="GO:0008616">
    <property type="term" value="P:queuosine biosynthetic process"/>
    <property type="evidence" value="ECO:0007669"/>
    <property type="project" value="UniProtKB-UniRule"/>
</dbReference>
<dbReference type="GO" id="GO:0002099">
    <property type="term" value="P:tRNA wobble guanine modification"/>
    <property type="evidence" value="ECO:0007669"/>
    <property type="project" value="TreeGrafter"/>
</dbReference>
<dbReference type="GO" id="GO:0101030">
    <property type="term" value="P:tRNA-guanine transglycosylation"/>
    <property type="evidence" value="ECO:0007669"/>
    <property type="project" value="InterPro"/>
</dbReference>
<dbReference type="FunFam" id="3.20.20.105:FF:000001">
    <property type="entry name" value="Queuine tRNA-ribosyltransferase"/>
    <property type="match status" value="1"/>
</dbReference>
<dbReference type="Gene3D" id="3.20.20.105">
    <property type="entry name" value="Queuine tRNA-ribosyltransferase-like"/>
    <property type="match status" value="1"/>
</dbReference>
<dbReference type="HAMAP" id="MF_00168">
    <property type="entry name" value="Q_tRNA_Tgt"/>
    <property type="match status" value="1"/>
</dbReference>
<dbReference type="InterPro" id="IPR050076">
    <property type="entry name" value="ArchSynthase1/Queuine_TRR"/>
</dbReference>
<dbReference type="InterPro" id="IPR004803">
    <property type="entry name" value="TGT"/>
</dbReference>
<dbReference type="InterPro" id="IPR036511">
    <property type="entry name" value="TGT-like_sf"/>
</dbReference>
<dbReference type="InterPro" id="IPR002616">
    <property type="entry name" value="tRNA_ribo_trans-like"/>
</dbReference>
<dbReference type="NCBIfam" id="TIGR00430">
    <property type="entry name" value="Q_tRNA_tgt"/>
    <property type="match status" value="1"/>
</dbReference>
<dbReference type="NCBIfam" id="TIGR00449">
    <property type="entry name" value="tgt_general"/>
    <property type="match status" value="1"/>
</dbReference>
<dbReference type="PANTHER" id="PTHR46499">
    <property type="entry name" value="QUEUINE TRNA-RIBOSYLTRANSFERASE"/>
    <property type="match status" value="1"/>
</dbReference>
<dbReference type="PANTHER" id="PTHR46499:SF1">
    <property type="entry name" value="QUEUINE TRNA-RIBOSYLTRANSFERASE"/>
    <property type="match status" value="1"/>
</dbReference>
<dbReference type="Pfam" id="PF01702">
    <property type="entry name" value="TGT"/>
    <property type="match status" value="1"/>
</dbReference>
<dbReference type="SUPFAM" id="SSF51713">
    <property type="entry name" value="tRNA-guanine transglycosylase"/>
    <property type="match status" value="1"/>
</dbReference>
<keyword id="KW-0328">Glycosyltransferase</keyword>
<keyword id="KW-0479">Metal-binding</keyword>
<keyword id="KW-0671">Queuosine biosynthesis</keyword>
<keyword id="KW-0808">Transferase</keyword>
<keyword id="KW-0819">tRNA processing</keyword>
<keyword id="KW-0862">Zinc</keyword>
<comment type="function">
    <text evidence="1">Catalyzes the base-exchange of a guanine (G) residue with the queuine precursor 7-aminomethyl-7-deazaguanine (PreQ1) at position 34 (anticodon wobble position) in tRNAs with GU(N) anticodons (tRNA-Asp, -Asn, -His and -Tyr). Catalysis occurs through a double-displacement mechanism. The nucleophile active site attacks the C1' of nucleotide 34 to detach the guanine base from the RNA, forming a covalent enzyme-RNA intermediate. The proton acceptor active site deprotonates the incoming PreQ1, allowing a nucleophilic attack on the C1' of the ribose to form the product. After dissociation, two additional enzymatic reactions on the tRNA convert PreQ1 to queuine (Q), resulting in the hypermodified nucleoside queuosine (7-(((4,5-cis-dihydroxy-2-cyclopenten-1-yl)amino)methyl)-7-deazaguanosine).</text>
</comment>
<comment type="catalytic activity">
    <reaction evidence="1">
        <text>7-aminomethyl-7-carbaguanine + guanosine(34) in tRNA = 7-aminomethyl-7-carbaguanosine(34) in tRNA + guanine</text>
        <dbReference type="Rhea" id="RHEA:24104"/>
        <dbReference type="Rhea" id="RHEA-COMP:10341"/>
        <dbReference type="Rhea" id="RHEA-COMP:10342"/>
        <dbReference type="ChEBI" id="CHEBI:16235"/>
        <dbReference type="ChEBI" id="CHEBI:58703"/>
        <dbReference type="ChEBI" id="CHEBI:74269"/>
        <dbReference type="ChEBI" id="CHEBI:82833"/>
        <dbReference type="EC" id="2.4.2.29"/>
    </reaction>
</comment>
<comment type="cofactor">
    <cofactor evidence="1">
        <name>Zn(2+)</name>
        <dbReference type="ChEBI" id="CHEBI:29105"/>
    </cofactor>
    <text evidence="1">Binds 1 zinc ion per subunit.</text>
</comment>
<comment type="pathway">
    <text evidence="1">tRNA modification; tRNA-queuosine biosynthesis.</text>
</comment>
<comment type="subunit">
    <text evidence="1">Homodimer. Within each dimer, one monomer is responsible for RNA recognition and catalysis, while the other monomer binds to the replacement base PreQ1.</text>
</comment>
<comment type="similarity">
    <text evidence="1">Belongs to the queuine tRNA-ribosyltransferase family.</text>
</comment>
<accession>Q032U4</accession>
<gene>
    <name evidence="1" type="primary">tgt</name>
    <name type="ordered locus">LACR_0159</name>
</gene>
<feature type="chain" id="PRO_1000016809" description="Queuine tRNA-ribosyltransferase">
    <location>
        <begin position="1"/>
        <end position="382"/>
    </location>
</feature>
<feature type="region of interest" description="RNA binding" evidence="1">
    <location>
        <begin position="252"/>
        <end position="258"/>
    </location>
</feature>
<feature type="region of interest" description="RNA binding; important for wobble base 34 recognition" evidence="1">
    <location>
        <begin position="276"/>
        <end position="280"/>
    </location>
</feature>
<feature type="active site" description="Proton acceptor" evidence="1">
    <location>
        <position position="96"/>
    </location>
</feature>
<feature type="active site" description="Nucleophile" evidence="1">
    <location>
        <position position="271"/>
    </location>
</feature>
<feature type="binding site" evidence="1">
    <location>
        <begin position="96"/>
        <end position="100"/>
    </location>
    <ligand>
        <name>substrate</name>
    </ligand>
</feature>
<feature type="binding site" evidence="1">
    <location>
        <position position="151"/>
    </location>
    <ligand>
        <name>substrate</name>
    </ligand>
</feature>
<feature type="binding site" evidence="1">
    <location>
        <position position="194"/>
    </location>
    <ligand>
        <name>substrate</name>
    </ligand>
</feature>
<feature type="binding site" evidence="1">
    <location>
        <position position="221"/>
    </location>
    <ligand>
        <name>substrate</name>
    </ligand>
</feature>
<feature type="binding site" evidence="1">
    <location>
        <position position="309"/>
    </location>
    <ligand>
        <name>Zn(2+)</name>
        <dbReference type="ChEBI" id="CHEBI:29105"/>
    </ligand>
</feature>
<feature type="binding site" evidence="1">
    <location>
        <position position="311"/>
    </location>
    <ligand>
        <name>Zn(2+)</name>
        <dbReference type="ChEBI" id="CHEBI:29105"/>
    </ligand>
</feature>
<feature type="binding site" evidence="1">
    <location>
        <position position="314"/>
    </location>
    <ligand>
        <name>Zn(2+)</name>
        <dbReference type="ChEBI" id="CHEBI:29105"/>
    </ligand>
</feature>
<feature type="binding site" evidence="1">
    <location>
        <position position="340"/>
    </location>
    <ligand>
        <name>Zn(2+)</name>
        <dbReference type="ChEBI" id="CHEBI:29105"/>
    </ligand>
</feature>
<name>TGT_LACLS</name>
<evidence type="ECO:0000255" key="1">
    <source>
        <dbReference type="HAMAP-Rule" id="MF_00168"/>
    </source>
</evidence>
<reference key="1">
    <citation type="journal article" date="2006" name="Proc. Natl. Acad. Sci. U.S.A.">
        <title>Comparative genomics of the lactic acid bacteria.</title>
        <authorList>
            <person name="Makarova K.S."/>
            <person name="Slesarev A."/>
            <person name="Wolf Y.I."/>
            <person name="Sorokin A."/>
            <person name="Mirkin B."/>
            <person name="Koonin E.V."/>
            <person name="Pavlov A."/>
            <person name="Pavlova N."/>
            <person name="Karamychev V."/>
            <person name="Polouchine N."/>
            <person name="Shakhova V."/>
            <person name="Grigoriev I."/>
            <person name="Lou Y."/>
            <person name="Rohksar D."/>
            <person name="Lucas S."/>
            <person name="Huang K."/>
            <person name="Goodstein D.M."/>
            <person name="Hawkins T."/>
            <person name="Plengvidhya V."/>
            <person name="Welker D."/>
            <person name="Hughes J."/>
            <person name="Goh Y."/>
            <person name="Benson A."/>
            <person name="Baldwin K."/>
            <person name="Lee J.-H."/>
            <person name="Diaz-Muniz I."/>
            <person name="Dosti B."/>
            <person name="Smeianov V."/>
            <person name="Wechter W."/>
            <person name="Barabote R."/>
            <person name="Lorca G."/>
            <person name="Altermann E."/>
            <person name="Barrangou R."/>
            <person name="Ganesan B."/>
            <person name="Xie Y."/>
            <person name="Rawsthorne H."/>
            <person name="Tamir D."/>
            <person name="Parker C."/>
            <person name="Breidt F."/>
            <person name="Broadbent J.R."/>
            <person name="Hutkins R."/>
            <person name="O'Sullivan D."/>
            <person name="Steele J."/>
            <person name="Unlu G."/>
            <person name="Saier M.H. Jr."/>
            <person name="Klaenhammer T."/>
            <person name="Richardson P."/>
            <person name="Kozyavkin S."/>
            <person name="Weimer B.C."/>
            <person name="Mills D.A."/>
        </authorList>
    </citation>
    <scope>NUCLEOTIDE SEQUENCE [LARGE SCALE GENOMIC DNA]</scope>
    <source>
        <strain>SK11</strain>
    </source>
</reference>
<proteinExistence type="inferred from homology"/>
<sequence length="382" mass="43344">MTEHAIKYRLIKKEKHTGARLGEIITPHGTFPTPMFMPVGTQATVKTMSPEELKTLGSGIILSNTYHLWLRPGDELVAEAGGLHKFMNWDQPILTDSGGFQVYSLVQNKKNITEEGVKFKSHLDGRELFLNPEKAISIQNNLGSDIMMSFDECPPFYQPYDYVKASVERTSRWAERGLNAHRRPNDQGLFGIVQGAGFEDLRRQSASDLTSMDFAGYSIGGLAVGESHKEMNAVLDFTTPMLPEDKPRYLMGVGAPDSLIDGVIRGVDMFDCVLPTRIARNGTLMTHFGRVNIRNAKYEHDFTPLDPMCDCYTCTNYTRAYLRHLIKADETFGLRLCSYHNLHFLVNLMKDVRQAIMDDNLLEFREDFCERYGYNQPNAKDF</sequence>
<protein>
    <recommendedName>
        <fullName evidence="1">Queuine tRNA-ribosyltransferase</fullName>
        <ecNumber evidence="1">2.4.2.29</ecNumber>
    </recommendedName>
    <alternativeName>
        <fullName evidence="1">Guanine insertion enzyme</fullName>
    </alternativeName>
    <alternativeName>
        <fullName evidence="1">tRNA-guanine transglycosylase</fullName>
    </alternativeName>
</protein>